<sequence length="725" mass="77422">MGSQNSDDDSGSSGSSRSGSRSVTPQGGSAPGSQRSRRSGSGSDRSRSGSRSSRSRSGSGSPRSARSGSAESRHSQLSGSARSKRSRSAHSRRSGSARSRKSGTPESPQSHRSGSLQSRKSGSPQSRRSGSPQSRKSGSTHSRRSGSAHSRRSGSARSRKSGSAQSDRSESRSRSHSGSLKGNEESRSNSPNLQIDVERANSKSGSRSRSRSRSGSRTSRSRSKTGTPSPNRSRSGSASGSGSDVGVPKKKARKASGSDQEKKKSGSDSDIEESPTKAKKSRLIDTDSDSNQDVGKKAPAAADIFGDADDISDDEDEAGPAARKSPVRSKSRSQSKSHSHSRSMSHSRSRSRSRSRDKVESQVESAPKEDEPEPLPETRIDVEIPRISADLGKEQHFIKLPNFLSVVTHPFDPETYEDEIDEEETMDEEGRQRIKLKVSNTIRWREYMNNKGDMVRESNARFVRWSDGSMSLHLGNEIFDAYRQPLLGDHNHLFVRQGTGLQGQSVFRTKLTFRPHSTESFTHKKMTMSLADRSSKTSGIKILTQVGKDPTTDRPTQLREEEAKLRQAMRNQHKSLPKKKKPGAGEPLIGGGTSSYQHDEGSDDENAISLSAIKNRYKKGSGAGQAEVKASTIYSSDEDEGSDFEARRSKKVDKAKASKALRDSDSESDAGSAKSGHSNKSGGEGGSASGSENEGSQKSGGGSSKSASGSGSGSGSGSGSGSDND</sequence>
<organism evidence="8">
    <name type="scientific">Drosophila melanogaster</name>
    <name type="common">Fruit fly</name>
    <dbReference type="NCBI Taxonomy" id="7227"/>
    <lineage>
        <taxon>Eukaryota</taxon>
        <taxon>Metazoa</taxon>
        <taxon>Ecdysozoa</taxon>
        <taxon>Arthropoda</taxon>
        <taxon>Hexapoda</taxon>
        <taxon>Insecta</taxon>
        <taxon>Pterygota</taxon>
        <taxon>Neoptera</taxon>
        <taxon>Endopterygota</taxon>
        <taxon>Diptera</taxon>
        <taxon>Brachycera</taxon>
        <taxon>Muscomorpha</taxon>
        <taxon>Ephydroidea</taxon>
        <taxon>Drosophilidae</taxon>
        <taxon>Drosophila</taxon>
        <taxon>Sophophora</taxon>
    </lineage>
</organism>
<protein>
    <recommendedName>
        <fullName>Another transcription unit protein</fullName>
    </recommendedName>
</protein>
<accession>Q94546</accession>
<accession>Q9VNE6</accession>
<gene>
    <name type="primary">Atu</name>
    <name type="ORF">CG1433</name>
</gene>
<dbReference type="EMBL" id="U75467">
    <property type="protein sequence ID" value="AAB18341.1"/>
    <property type="molecule type" value="Genomic_DNA"/>
</dbReference>
<dbReference type="EMBL" id="AE014297">
    <property type="protein sequence ID" value="AAF51991.1"/>
    <property type="molecule type" value="Genomic_DNA"/>
</dbReference>
<dbReference type="EMBL" id="AY075403">
    <property type="protein sequence ID" value="AAL68232.1"/>
    <property type="molecule type" value="mRNA"/>
</dbReference>
<dbReference type="RefSeq" id="NP_524240.1">
    <property type="nucleotide sequence ID" value="NM_079516.3"/>
</dbReference>
<dbReference type="SMR" id="Q94546"/>
<dbReference type="BioGRID" id="65890">
    <property type="interactions" value="5"/>
</dbReference>
<dbReference type="ComplexPortal" id="CPX-2370">
    <property type="entry name" value="PAF1 complex"/>
</dbReference>
<dbReference type="FunCoup" id="Q94546">
    <property type="interactions" value="364"/>
</dbReference>
<dbReference type="IntAct" id="Q94546">
    <property type="interactions" value="9"/>
</dbReference>
<dbReference type="STRING" id="7227.FBpp0078353"/>
<dbReference type="iPTMnet" id="Q94546"/>
<dbReference type="PaxDb" id="7227-FBpp0078353"/>
<dbReference type="DNASU" id="40684"/>
<dbReference type="EnsemblMetazoa" id="FBtr0078704">
    <property type="protein sequence ID" value="FBpp0078353"/>
    <property type="gene ID" value="FBgn0019637"/>
</dbReference>
<dbReference type="GeneID" id="40684"/>
<dbReference type="KEGG" id="dme:Dmel_CG1433"/>
<dbReference type="AGR" id="FB:FBgn0019637"/>
<dbReference type="CTD" id="40684"/>
<dbReference type="FlyBase" id="FBgn0019637">
    <property type="gene designation" value="Atu"/>
</dbReference>
<dbReference type="VEuPathDB" id="VectorBase:FBgn0019637"/>
<dbReference type="eggNOG" id="KOG2428">
    <property type="taxonomic scope" value="Eukaryota"/>
</dbReference>
<dbReference type="GeneTree" id="ENSGT00550000074952"/>
<dbReference type="HOGENOM" id="CLU_021818_0_1_1"/>
<dbReference type="InParanoid" id="Q94546"/>
<dbReference type="OMA" id="TIRWREY"/>
<dbReference type="OrthoDB" id="20844at2759"/>
<dbReference type="PhylomeDB" id="Q94546"/>
<dbReference type="Reactome" id="R-DME-112382">
    <property type="pathway name" value="Formation of RNA Pol II elongation complex"/>
</dbReference>
<dbReference type="Reactome" id="R-DME-201722">
    <property type="pathway name" value="Formation of the beta-catenin:TCF transactivating complex"/>
</dbReference>
<dbReference type="Reactome" id="R-DME-674695">
    <property type="pathway name" value="RNA Polymerase II Pre-transcription Events"/>
</dbReference>
<dbReference type="Reactome" id="R-DME-75955">
    <property type="pathway name" value="RNA Polymerase II Transcription Elongation"/>
</dbReference>
<dbReference type="Reactome" id="R-DME-8866654">
    <property type="pathway name" value="E3 ubiquitin ligases ubiquitinate target proteins"/>
</dbReference>
<dbReference type="BioGRID-ORCS" id="40684">
    <property type="hits" value="0 hits in 1 CRISPR screen"/>
</dbReference>
<dbReference type="GenomeRNAi" id="40684"/>
<dbReference type="PRO" id="PR:Q94546"/>
<dbReference type="Proteomes" id="UP000000803">
    <property type="component" value="Chromosome 3R"/>
</dbReference>
<dbReference type="Bgee" id="FBgn0019637">
    <property type="expression patterns" value="Expressed in eye disc (Drosophila) and 47 other cell types or tissues"/>
</dbReference>
<dbReference type="GO" id="GO:0016593">
    <property type="term" value="C:Cdc73/Paf1 complex"/>
    <property type="evidence" value="ECO:0007669"/>
    <property type="project" value="InterPro"/>
</dbReference>
<dbReference type="GO" id="GO:0005634">
    <property type="term" value="C:nucleus"/>
    <property type="evidence" value="ECO:0000318"/>
    <property type="project" value="GO_Central"/>
</dbReference>
<dbReference type="GO" id="GO:1990269">
    <property type="term" value="F:RNA polymerase II C-terminal domain phosphoserine binding"/>
    <property type="evidence" value="ECO:0000318"/>
    <property type="project" value="GO_Central"/>
</dbReference>
<dbReference type="GO" id="GO:0032968">
    <property type="term" value="P:positive regulation of transcription elongation by RNA polymerase II"/>
    <property type="evidence" value="ECO:0000318"/>
    <property type="project" value="GO_Central"/>
</dbReference>
<dbReference type="GO" id="GO:0035206">
    <property type="term" value="P:regulation of hemocyte proliferation"/>
    <property type="evidence" value="ECO:0000315"/>
    <property type="project" value="FlyBase"/>
</dbReference>
<dbReference type="GO" id="GO:0006368">
    <property type="term" value="P:transcription elongation by RNA polymerase II"/>
    <property type="evidence" value="ECO:0007669"/>
    <property type="project" value="InterPro"/>
</dbReference>
<dbReference type="InterPro" id="IPR007149">
    <property type="entry name" value="Leo1"/>
</dbReference>
<dbReference type="PANTHER" id="PTHR23146">
    <property type="entry name" value="LEO1 PROTEIN"/>
    <property type="match status" value="1"/>
</dbReference>
<dbReference type="PANTHER" id="PTHR23146:SF0">
    <property type="entry name" value="RNA POLYMERASE-ASSOCIATED PROTEIN LEO1"/>
    <property type="match status" value="1"/>
</dbReference>
<dbReference type="Pfam" id="PF04004">
    <property type="entry name" value="Leo1"/>
    <property type="match status" value="1"/>
</dbReference>
<name>ATU_DROME</name>
<keyword id="KW-0597">Phosphoprotein</keyword>
<keyword id="KW-1185">Reference proteome</keyword>
<evidence type="ECO:0000256" key="1">
    <source>
        <dbReference type="SAM" id="MobiDB-lite"/>
    </source>
</evidence>
<evidence type="ECO:0000269" key="2">
    <source>
    </source>
</evidence>
<evidence type="ECO:0000269" key="3">
    <source>
    </source>
</evidence>
<evidence type="ECO:0000269" key="4">
    <source>
    </source>
</evidence>
<evidence type="ECO:0000269" key="5">
    <source>
    </source>
</evidence>
<evidence type="ECO:0000269" key="6">
    <source>
    </source>
</evidence>
<evidence type="ECO:0000305" key="7"/>
<evidence type="ECO:0000312" key="8">
    <source>
        <dbReference type="EMBL" id="AAL68232.1"/>
    </source>
</evidence>
<reference evidence="7" key="1">
    <citation type="journal article" date="1998" name="Genetics">
        <title>Regena (Rga), a Drosophila homolog of the global negative transcriptional regulator CDC36 (NOT2) from yeast, modifies gene expression and suppresses position effect variegation.</title>
        <authorList>
            <person name="Frolov M.V."/>
            <person name="Benevolenskaya E.V."/>
            <person name="Birchler J.A."/>
        </authorList>
    </citation>
    <scope>NUCLEOTIDE SEQUENCE [GENOMIC DNA]</scope>
    <source>
        <strain evidence="6">Canton-S</strain>
        <tissue evidence="6">Eye-antennal disk</tissue>
    </source>
</reference>
<reference evidence="7" key="2">
    <citation type="journal article" date="2000" name="Science">
        <title>The genome sequence of Drosophila melanogaster.</title>
        <authorList>
            <person name="Adams M.D."/>
            <person name="Celniker S.E."/>
            <person name="Holt R.A."/>
            <person name="Evans C.A."/>
            <person name="Gocayne J.D."/>
            <person name="Amanatides P.G."/>
            <person name="Scherer S.E."/>
            <person name="Li P.W."/>
            <person name="Hoskins R.A."/>
            <person name="Galle R.F."/>
            <person name="George R.A."/>
            <person name="Lewis S.E."/>
            <person name="Richards S."/>
            <person name="Ashburner M."/>
            <person name="Henderson S.N."/>
            <person name="Sutton G.G."/>
            <person name="Wortman J.R."/>
            <person name="Yandell M.D."/>
            <person name="Zhang Q."/>
            <person name="Chen L.X."/>
            <person name="Brandon R.C."/>
            <person name="Rogers Y.-H.C."/>
            <person name="Blazej R.G."/>
            <person name="Champe M."/>
            <person name="Pfeiffer B.D."/>
            <person name="Wan K.H."/>
            <person name="Doyle C."/>
            <person name="Baxter E.G."/>
            <person name="Helt G."/>
            <person name="Nelson C.R."/>
            <person name="Miklos G.L.G."/>
            <person name="Abril J.F."/>
            <person name="Agbayani A."/>
            <person name="An H.-J."/>
            <person name="Andrews-Pfannkoch C."/>
            <person name="Baldwin D."/>
            <person name="Ballew R.M."/>
            <person name="Basu A."/>
            <person name="Baxendale J."/>
            <person name="Bayraktaroglu L."/>
            <person name="Beasley E.M."/>
            <person name="Beeson K.Y."/>
            <person name="Benos P.V."/>
            <person name="Berman B.P."/>
            <person name="Bhandari D."/>
            <person name="Bolshakov S."/>
            <person name="Borkova D."/>
            <person name="Botchan M.R."/>
            <person name="Bouck J."/>
            <person name="Brokstein P."/>
            <person name="Brottier P."/>
            <person name="Burtis K.C."/>
            <person name="Busam D.A."/>
            <person name="Butler H."/>
            <person name="Cadieu E."/>
            <person name="Center A."/>
            <person name="Chandra I."/>
            <person name="Cherry J.M."/>
            <person name="Cawley S."/>
            <person name="Dahlke C."/>
            <person name="Davenport L.B."/>
            <person name="Davies P."/>
            <person name="de Pablos B."/>
            <person name="Delcher A."/>
            <person name="Deng Z."/>
            <person name="Mays A.D."/>
            <person name="Dew I."/>
            <person name="Dietz S.M."/>
            <person name="Dodson K."/>
            <person name="Doup L.E."/>
            <person name="Downes M."/>
            <person name="Dugan-Rocha S."/>
            <person name="Dunkov B.C."/>
            <person name="Dunn P."/>
            <person name="Durbin K.J."/>
            <person name="Evangelista C.C."/>
            <person name="Ferraz C."/>
            <person name="Ferriera S."/>
            <person name="Fleischmann W."/>
            <person name="Fosler C."/>
            <person name="Gabrielian A.E."/>
            <person name="Garg N.S."/>
            <person name="Gelbart W.M."/>
            <person name="Glasser K."/>
            <person name="Glodek A."/>
            <person name="Gong F."/>
            <person name="Gorrell J.H."/>
            <person name="Gu Z."/>
            <person name="Guan P."/>
            <person name="Harris M."/>
            <person name="Harris N.L."/>
            <person name="Harvey D.A."/>
            <person name="Heiman T.J."/>
            <person name="Hernandez J.R."/>
            <person name="Houck J."/>
            <person name="Hostin D."/>
            <person name="Houston K.A."/>
            <person name="Howland T.J."/>
            <person name="Wei M.-H."/>
            <person name="Ibegwam C."/>
            <person name="Jalali M."/>
            <person name="Kalush F."/>
            <person name="Karpen G.H."/>
            <person name="Ke Z."/>
            <person name="Kennison J.A."/>
            <person name="Ketchum K.A."/>
            <person name="Kimmel B.E."/>
            <person name="Kodira C.D."/>
            <person name="Kraft C.L."/>
            <person name="Kravitz S."/>
            <person name="Kulp D."/>
            <person name="Lai Z."/>
            <person name="Lasko P."/>
            <person name="Lei Y."/>
            <person name="Levitsky A.A."/>
            <person name="Li J.H."/>
            <person name="Li Z."/>
            <person name="Liang Y."/>
            <person name="Lin X."/>
            <person name="Liu X."/>
            <person name="Mattei B."/>
            <person name="McIntosh T.C."/>
            <person name="McLeod M.P."/>
            <person name="McPherson D."/>
            <person name="Merkulov G."/>
            <person name="Milshina N.V."/>
            <person name="Mobarry C."/>
            <person name="Morris J."/>
            <person name="Moshrefi A."/>
            <person name="Mount S.M."/>
            <person name="Moy M."/>
            <person name="Murphy B."/>
            <person name="Murphy L."/>
            <person name="Muzny D.M."/>
            <person name="Nelson D.L."/>
            <person name="Nelson D.R."/>
            <person name="Nelson K.A."/>
            <person name="Nixon K."/>
            <person name="Nusskern D.R."/>
            <person name="Pacleb J.M."/>
            <person name="Palazzolo M."/>
            <person name="Pittman G.S."/>
            <person name="Pan S."/>
            <person name="Pollard J."/>
            <person name="Puri V."/>
            <person name="Reese M.G."/>
            <person name="Reinert K."/>
            <person name="Remington K."/>
            <person name="Saunders R.D.C."/>
            <person name="Scheeler F."/>
            <person name="Shen H."/>
            <person name="Shue B.C."/>
            <person name="Siden-Kiamos I."/>
            <person name="Simpson M."/>
            <person name="Skupski M.P."/>
            <person name="Smith T.J."/>
            <person name="Spier E."/>
            <person name="Spradling A.C."/>
            <person name="Stapleton M."/>
            <person name="Strong R."/>
            <person name="Sun E."/>
            <person name="Svirskas R."/>
            <person name="Tector C."/>
            <person name="Turner R."/>
            <person name="Venter E."/>
            <person name="Wang A.H."/>
            <person name="Wang X."/>
            <person name="Wang Z.-Y."/>
            <person name="Wassarman D.A."/>
            <person name="Weinstock G.M."/>
            <person name="Weissenbach J."/>
            <person name="Williams S.M."/>
            <person name="Woodage T."/>
            <person name="Worley K.C."/>
            <person name="Wu D."/>
            <person name="Yang S."/>
            <person name="Yao Q.A."/>
            <person name="Ye J."/>
            <person name="Yeh R.-F."/>
            <person name="Zaveri J.S."/>
            <person name="Zhan M."/>
            <person name="Zhang G."/>
            <person name="Zhao Q."/>
            <person name="Zheng L."/>
            <person name="Zheng X.H."/>
            <person name="Zhong F.N."/>
            <person name="Zhong W."/>
            <person name="Zhou X."/>
            <person name="Zhu S.C."/>
            <person name="Zhu X."/>
            <person name="Smith H.O."/>
            <person name="Gibbs R.A."/>
            <person name="Myers E.W."/>
            <person name="Rubin G.M."/>
            <person name="Venter J.C."/>
        </authorList>
    </citation>
    <scope>NUCLEOTIDE SEQUENCE [LARGE SCALE GENOMIC DNA]</scope>
    <source>
        <strain evidence="2">Berkeley</strain>
    </source>
</reference>
<reference key="3">
    <citation type="journal article" date="2002" name="Genome Biol.">
        <title>Annotation of the Drosophila melanogaster euchromatic genome: a systematic review.</title>
        <authorList>
            <person name="Misra S."/>
            <person name="Crosby M.A."/>
            <person name="Mungall C.J."/>
            <person name="Matthews B.B."/>
            <person name="Campbell K.S."/>
            <person name="Hradecky P."/>
            <person name="Huang Y."/>
            <person name="Kaminker J.S."/>
            <person name="Millburn G.H."/>
            <person name="Prochnik S.E."/>
            <person name="Smith C.D."/>
            <person name="Tupy J.L."/>
            <person name="Whitfield E.J."/>
            <person name="Bayraktaroglu L."/>
            <person name="Berman B.P."/>
            <person name="Bettencourt B.R."/>
            <person name="Celniker S.E."/>
            <person name="de Grey A.D.N.J."/>
            <person name="Drysdale R.A."/>
            <person name="Harris N.L."/>
            <person name="Richter J."/>
            <person name="Russo S."/>
            <person name="Schroeder A.J."/>
            <person name="Shu S.Q."/>
            <person name="Stapleton M."/>
            <person name="Yamada C."/>
            <person name="Ashburner M."/>
            <person name="Gelbart W.M."/>
            <person name="Rubin G.M."/>
            <person name="Lewis S.E."/>
        </authorList>
    </citation>
    <scope>GENOME REANNOTATION</scope>
    <source>
        <strain>Berkeley</strain>
    </source>
</reference>
<reference evidence="7" key="4">
    <citation type="journal article" date="2002" name="Genome Biol.">
        <title>A Drosophila full-length cDNA resource.</title>
        <authorList>
            <person name="Stapleton M."/>
            <person name="Carlson J.W."/>
            <person name="Brokstein P."/>
            <person name="Yu C."/>
            <person name="Champe M."/>
            <person name="George R.A."/>
            <person name="Guarin H."/>
            <person name="Kronmiller B."/>
            <person name="Pacleb J.M."/>
            <person name="Park S."/>
            <person name="Wan K.H."/>
            <person name="Rubin G.M."/>
            <person name="Celniker S.E."/>
        </authorList>
    </citation>
    <scope>NUCLEOTIDE SEQUENCE [LARGE SCALE MRNA]</scope>
    <source>
        <strain evidence="3">Berkeley</strain>
        <tissue evidence="3">Embryo</tissue>
    </source>
</reference>
<reference key="5">
    <citation type="journal article" date="2007" name="Mol. Biosyst.">
        <title>An integrated chemical, mass spectrometric and computational strategy for (quantitative) phosphoproteomics: application to Drosophila melanogaster Kc167 cells.</title>
        <authorList>
            <person name="Bodenmiller B."/>
            <person name="Mueller L.N."/>
            <person name="Pedrioli P.G.A."/>
            <person name="Pflieger D."/>
            <person name="Juenger M.A."/>
            <person name="Eng J.K."/>
            <person name="Aebersold R."/>
            <person name="Tao W.A."/>
        </authorList>
    </citation>
    <scope>PHOSPHORYLATION [LARGE SCALE ANALYSIS] AT SER-312</scope>
    <scope>IDENTIFICATION BY MASS SPECTROMETRY</scope>
</reference>
<reference key="6">
    <citation type="journal article" date="2008" name="J. Proteome Res.">
        <title>Phosphoproteome analysis of Drosophila melanogaster embryos.</title>
        <authorList>
            <person name="Zhai B."/>
            <person name="Villen J."/>
            <person name="Beausoleil S.A."/>
            <person name="Mintseris J."/>
            <person name="Gygi S.P."/>
        </authorList>
    </citation>
    <scope>PHOSPHORYLATION [LARGE SCALE ANALYSIS] AT SER-175; SER-186; SER-188; SER-190; SER-265; SER-267; SER-269; THR-286; SER-288; SER-290; SER-355; THR-593; SER-595; SER-602; SER-631; THR-632; SER-635; SER-636 AND SER-642</scope>
    <scope>IDENTIFICATION BY MASS SPECTROMETRY</scope>
    <source>
        <tissue>Embryo</tissue>
    </source>
</reference>
<proteinExistence type="evidence at protein level"/>
<feature type="chain" id="PRO_0000064747" description="Another transcription unit protein">
    <location>
        <begin position="1"/>
        <end position="725"/>
    </location>
</feature>
<feature type="region of interest" description="Disordered" evidence="1">
    <location>
        <begin position="1"/>
        <end position="379"/>
    </location>
</feature>
<feature type="region of interest" description="Disordered" evidence="1">
    <location>
        <begin position="566"/>
        <end position="603"/>
    </location>
</feature>
<feature type="region of interest" description="Disordered" evidence="1">
    <location>
        <begin position="617"/>
        <end position="725"/>
    </location>
</feature>
<feature type="compositionally biased region" description="Acidic residues" evidence="1">
    <location>
        <begin position="1"/>
        <end position="10"/>
    </location>
</feature>
<feature type="compositionally biased region" description="Low complexity" evidence="1">
    <location>
        <begin position="11"/>
        <end position="70"/>
    </location>
</feature>
<feature type="compositionally biased region" description="Basic residues" evidence="1">
    <location>
        <begin position="82"/>
        <end position="101"/>
    </location>
</feature>
<feature type="compositionally biased region" description="Polar residues" evidence="1">
    <location>
        <begin position="104"/>
        <end position="116"/>
    </location>
</feature>
<feature type="compositionally biased region" description="Low complexity" evidence="1">
    <location>
        <begin position="117"/>
        <end position="140"/>
    </location>
</feature>
<feature type="compositionally biased region" description="Basic residues" evidence="1">
    <location>
        <begin position="141"/>
        <end position="160"/>
    </location>
</feature>
<feature type="compositionally biased region" description="Basic residues" evidence="1">
    <location>
        <begin position="206"/>
        <end position="223"/>
    </location>
</feature>
<feature type="compositionally biased region" description="Low complexity" evidence="1">
    <location>
        <begin position="224"/>
        <end position="242"/>
    </location>
</feature>
<feature type="compositionally biased region" description="Acidic residues" evidence="1">
    <location>
        <begin position="306"/>
        <end position="318"/>
    </location>
</feature>
<feature type="compositionally biased region" description="Basic residues" evidence="1">
    <location>
        <begin position="325"/>
        <end position="353"/>
    </location>
</feature>
<feature type="compositionally biased region" description="Basic and acidic residues" evidence="1">
    <location>
        <begin position="354"/>
        <end position="369"/>
    </location>
</feature>
<feature type="compositionally biased region" description="Basic residues" evidence="1">
    <location>
        <begin position="571"/>
        <end position="582"/>
    </location>
</feature>
<feature type="compositionally biased region" description="Basic and acidic residues" evidence="1">
    <location>
        <begin position="644"/>
        <end position="665"/>
    </location>
</feature>
<feature type="compositionally biased region" description="Gly residues" evidence="1">
    <location>
        <begin position="710"/>
        <end position="725"/>
    </location>
</feature>
<feature type="modified residue" description="Phosphoserine" evidence="5">
    <location>
        <position position="175"/>
    </location>
</feature>
<feature type="modified residue" description="Phosphoserine" evidence="5">
    <location>
        <position position="186"/>
    </location>
</feature>
<feature type="modified residue" description="Phosphoserine" evidence="5">
    <location>
        <position position="188"/>
    </location>
</feature>
<feature type="modified residue" description="Phosphoserine" evidence="5">
    <location>
        <position position="190"/>
    </location>
</feature>
<feature type="modified residue" description="Phosphoserine" evidence="5">
    <location>
        <position position="265"/>
    </location>
</feature>
<feature type="modified residue" description="Phosphoserine" evidence="5">
    <location>
        <position position="267"/>
    </location>
</feature>
<feature type="modified residue" description="Phosphoserine" evidence="5">
    <location>
        <position position="269"/>
    </location>
</feature>
<feature type="modified residue" description="Phosphothreonine" evidence="5">
    <location>
        <position position="286"/>
    </location>
</feature>
<feature type="modified residue" description="Phosphoserine" evidence="5">
    <location>
        <position position="288"/>
    </location>
</feature>
<feature type="modified residue" description="Phosphoserine" evidence="5">
    <location>
        <position position="290"/>
    </location>
</feature>
<feature type="modified residue" description="Phosphoserine" evidence="4">
    <location>
        <position position="312"/>
    </location>
</feature>
<feature type="modified residue" description="Phosphoserine" evidence="5">
    <location>
        <position position="355"/>
    </location>
</feature>
<feature type="modified residue" description="Phosphothreonine" evidence="5">
    <location>
        <position position="593"/>
    </location>
</feature>
<feature type="modified residue" description="Phosphoserine" evidence="5">
    <location>
        <position position="595"/>
    </location>
</feature>
<feature type="modified residue" description="Phosphoserine" evidence="5">
    <location>
        <position position="602"/>
    </location>
</feature>
<feature type="modified residue" description="Phosphoserine" evidence="5">
    <location>
        <position position="631"/>
    </location>
</feature>
<feature type="modified residue" description="Phosphothreonine" evidence="5">
    <location>
        <position position="632"/>
    </location>
</feature>
<feature type="modified residue" description="Phosphoserine" evidence="5">
    <location>
        <position position="635"/>
    </location>
</feature>
<feature type="modified residue" description="Phosphoserine" evidence="5">
    <location>
        <position position="636"/>
    </location>
</feature>
<feature type="modified residue" description="Phosphoserine" evidence="5">
    <location>
        <position position="642"/>
    </location>
</feature>
<feature type="sequence conflict" description="In Ref. 1." evidence="7" ref="1">
    <original>GSQNSDDDSG</original>
    <variation>MGSQNSDDDS</variation>
    <location>
        <begin position="2"/>
        <end position="11"/>
    </location>
</feature>
<feature type="sequence conflict" description="In Ref. 1; AAB18341." evidence="7" ref="1">
    <original>G</original>
    <variation>A</variation>
    <location>
        <position position="79"/>
    </location>
</feature>
<feature type="sequence conflict" description="In Ref. 1; AAB18341." evidence="7" ref="1">
    <original>S</original>
    <variation>T</variation>
    <location>
        <position position="99"/>
    </location>
</feature>
<feature type="sequence conflict" description="In Ref. 1; AAB18341." evidence="7" ref="1">
    <original>D</original>
    <variation>G</variation>
    <location>
        <position position="309"/>
    </location>
</feature>
<feature type="sequence conflict" description="In Ref. 1; AAB18341." evidence="7" ref="1">
    <original>A</original>
    <variation>R</variation>
    <location>
        <position position="626"/>
    </location>
</feature>